<keyword id="KW-0963">Cytoplasm</keyword>
<keyword id="KW-0342">GTP-binding</keyword>
<keyword id="KW-0378">Hydrolase</keyword>
<keyword id="KW-0460">Magnesium</keyword>
<keyword id="KW-0479">Metal-binding</keyword>
<keyword id="KW-0547">Nucleotide-binding</keyword>
<keyword id="KW-1185">Reference proteome</keyword>
<proteinExistence type="inferred from homology"/>
<accession>B9DSH7</accession>
<sequence length="438" mass="48369">MSMFLDTAKISVQAGRGGDGMVAFRREKYVPNGGPWGGDGGKGGSVIFKVDEGLRTLMDFRYNRKFRAKAGEKGMTKGMHGRGSEDLIVLVPQGTTVKDAETGKVITDLVENGQEYVIAKGGRGGRGNIRFATPRNPAPEIAENGEPGEERELELELKILADVGLVGFPSVGKSTLLSVVSAAKPKIGAYHFTTIVPNLGMVRTKSGDSFAMADLPGLIEGASQGIGLGTQFLRHIERTRVILHVIDMSASEGRDPYEDYVSINNELETYNLRLLERPQIIVANKMDMPEAEEHLAAFKEKLAAEYDEFDDMPQIFPVSTLAKQGLDSLLDATANLLASTDEFLLYDESDYQVEDEVYYGFSEEEKAFEITRDDDASWVLSGEKLERLFVMTNMERDESIMKFARQLRGMGVDEALRERGAKDGDLVRIGNFEFEFVD</sequence>
<evidence type="ECO:0000255" key="1">
    <source>
        <dbReference type="HAMAP-Rule" id="MF_01454"/>
    </source>
</evidence>
<evidence type="ECO:0000255" key="2">
    <source>
        <dbReference type="PROSITE-ProRule" id="PRU01229"/>
    </source>
</evidence>
<evidence type="ECO:0000255" key="3">
    <source>
        <dbReference type="PROSITE-ProRule" id="PRU01231"/>
    </source>
</evidence>
<evidence type="ECO:0000256" key="4">
    <source>
        <dbReference type="SAM" id="MobiDB-lite"/>
    </source>
</evidence>
<dbReference type="EC" id="3.6.5.-" evidence="1"/>
<dbReference type="EMBL" id="AM946015">
    <property type="protein sequence ID" value="CAR42557.1"/>
    <property type="molecule type" value="Genomic_DNA"/>
</dbReference>
<dbReference type="SMR" id="B9DSH7"/>
<dbReference type="STRING" id="218495.SUB1157"/>
<dbReference type="KEGG" id="sub:SUB1157"/>
<dbReference type="eggNOG" id="COG0536">
    <property type="taxonomic scope" value="Bacteria"/>
</dbReference>
<dbReference type="HOGENOM" id="CLU_011747_2_1_9"/>
<dbReference type="OrthoDB" id="9807318at2"/>
<dbReference type="Proteomes" id="UP000000449">
    <property type="component" value="Chromosome"/>
</dbReference>
<dbReference type="GO" id="GO:0005737">
    <property type="term" value="C:cytoplasm"/>
    <property type="evidence" value="ECO:0007669"/>
    <property type="project" value="UniProtKB-SubCell"/>
</dbReference>
<dbReference type="GO" id="GO:0005525">
    <property type="term" value="F:GTP binding"/>
    <property type="evidence" value="ECO:0007669"/>
    <property type="project" value="UniProtKB-UniRule"/>
</dbReference>
<dbReference type="GO" id="GO:0003924">
    <property type="term" value="F:GTPase activity"/>
    <property type="evidence" value="ECO:0007669"/>
    <property type="project" value="UniProtKB-UniRule"/>
</dbReference>
<dbReference type="GO" id="GO:0000287">
    <property type="term" value="F:magnesium ion binding"/>
    <property type="evidence" value="ECO:0007669"/>
    <property type="project" value="InterPro"/>
</dbReference>
<dbReference type="GO" id="GO:0042254">
    <property type="term" value="P:ribosome biogenesis"/>
    <property type="evidence" value="ECO:0007669"/>
    <property type="project" value="UniProtKB-UniRule"/>
</dbReference>
<dbReference type="CDD" id="cd01898">
    <property type="entry name" value="Obg"/>
    <property type="match status" value="1"/>
</dbReference>
<dbReference type="FunFam" id="2.70.210.12:FF:000001">
    <property type="entry name" value="GTPase Obg"/>
    <property type="match status" value="1"/>
</dbReference>
<dbReference type="FunFam" id="3.40.50.300:FF:000515">
    <property type="entry name" value="GTPase Obg"/>
    <property type="match status" value="1"/>
</dbReference>
<dbReference type="Gene3D" id="3.30.300.350">
    <property type="entry name" value="GTP-binding protein OBG, C-terminal domain"/>
    <property type="match status" value="1"/>
</dbReference>
<dbReference type="Gene3D" id="2.70.210.12">
    <property type="entry name" value="GTP1/OBG domain"/>
    <property type="match status" value="1"/>
</dbReference>
<dbReference type="Gene3D" id="3.40.50.300">
    <property type="entry name" value="P-loop containing nucleotide triphosphate hydrolases"/>
    <property type="match status" value="1"/>
</dbReference>
<dbReference type="HAMAP" id="MF_01454">
    <property type="entry name" value="GTPase_Obg"/>
    <property type="match status" value="1"/>
</dbReference>
<dbReference type="InterPro" id="IPR031167">
    <property type="entry name" value="G_OBG"/>
</dbReference>
<dbReference type="InterPro" id="IPR006073">
    <property type="entry name" value="GTP-bd"/>
</dbReference>
<dbReference type="InterPro" id="IPR014100">
    <property type="entry name" value="GTP-bd_Obg/CgtA"/>
</dbReference>
<dbReference type="InterPro" id="IPR036346">
    <property type="entry name" value="GTP-bd_prot_GTP1/OBG_C_sf"/>
</dbReference>
<dbReference type="InterPro" id="IPR006074">
    <property type="entry name" value="GTP1-OBG_CS"/>
</dbReference>
<dbReference type="InterPro" id="IPR006169">
    <property type="entry name" value="GTP1_OBG_dom"/>
</dbReference>
<dbReference type="InterPro" id="IPR036726">
    <property type="entry name" value="GTP1_OBG_dom_sf"/>
</dbReference>
<dbReference type="InterPro" id="IPR045086">
    <property type="entry name" value="OBG_GTPase"/>
</dbReference>
<dbReference type="InterPro" id="IPR015349">
    <property type="entry name" value="OCT_dom"/>
</dbReference>
<dbReference type="InterPro" id="IPR027417">
    <property type="entry name" value="P-loop_NTPase"/>
</dbReference>
<dbReference type="InterPro" id="IPR005225">
    <property type="entry name" value="Small_GTP-bd"/>
</dbReference>
<dbReference type="NCBIfam" id="TIGR02729">
    <property type="entry name" value="Obg_CgtA"/>
    <property type="match status" value="1"/>
</dbReference>
<dbReference type="NCBIfam" id="TIGR03595">
    <property type="entry name" value="Obg_CgtA_exten"/>
    <property type="match status" value="1"/>
</dbReference>
<dbReference type="NCBIfam" id="NF008954">
    <property type="entry name" value="PRK12296.1"/>
    <property type="match status" value="1"/>
</dbReference>
<dbReference type="NCBIfam" id="NF008955">
    <property type="entry name" value="PRK12297.1"/>
    <property type="match status" value="1"/>
</dbReference>
<dbReference type="NCBIfam" id="NF008956">
    <property type="entry name" value="PRK12299.1"/>
    <property type="match status" value="1"/>
</dbReference>
<dbReference type="NCBIfam" id="TIGR00231">
    <property type="entry name" value="small_GTP"/>
    <property type="match status" value="1"/>
</dbReference>
<dbReference type="PANTHER" id="PTHR11702">
    <property type="entry name" value="DEVELOPMENTALLY REGULATED GTP-BINDING PROTEIN-RELATED"/>
    <property type="match status" value="1"/>
</dbReference>
<dbReference type="PANTHER" id="PTHR11702:SF31">
    <property type="entry name" value="MITOCHONDRIAL RIBOSOME-ASSOCIATED GTPASE 2"/>
    <property type="match status" value="1"/>
</dbReference>
<dbReference type="Pfam" id="PF09269">
    <property type="entry name" value="DUF1967"/>
    <property type="match status" value="1"/>
</dbReference>
<dbReference type="Pfam" id="PF01018">
    <property type="entry name" value="GTP1_OBG"/>
    <property type="match status" value="1"/>
</dbReference>
<dbReference type="Pfam" id="PF01926">
    <property type="entry name" value="MMR_HSR1"/>
    <property type="match status" value="1"/>
</dbReference>
<dbReference type="PIRSF" id="PIRSF002401">
    <property type="entry name" value="GTP_bd_Obg/CgtA"/>
    <property type="match status" value="1"/>
</dbReference>
<dbReference type="PRINTS" id="PR00326">
    <property type="entry name" value="GTP1OBG"/>
</dbReference>
<dbReference type="SUPFAM" id="SSF102741">
    <property type="entry name" value="Obg GTP-binding protein C-terminal domain"/>
    <property type="match status" value="1"/>
</dbReference>
<dbReference type="SUPFAM" id="SSF82051">
    <property type="entry name" value="Obg GTP-binding protein N-terminal domain"/>
    <property type="match status" value="1"/>
</dbReference>
<dbReference type="SUPFAM" id="SSF52540">
    <property type="entry name" value="P-loop containing nucleoside triphosphate hydrolases"/>
    <property type="match status" value="1"/>
</dbReference>
<dbReference type="PROSITE" id="PS51710">
    <property type="entry name" value="G_OBG"/>
    <property type="match status" value="1"/>
</dbReference>
<dbReference type="PROSITE" id="PS00905">
    <property type="entry name" value="GTP1_OBG"/>
    <property type="match status" value="1"/>
</dbReference>
<dbReference type="PROSITE" id="PS51883">
    <property type="entry name" value="OBG"/>
    <property type="match status" value="1"/>
</dbReference>
<dbReference type="PROSITE" id="PS51881">
    <property type="entry name" value="OCT"/>
    <property type="match status" value="1"/>
</dbReference>
<name>OBG_STRU0</name>
<gene>
    <name evidence="1" type="primary">obg</name>
    <name type="ordered locus">SUB1157</name>
</gene>
<protein>
    <recommendedName>
        <fullName evidence="1">GTPase Obg</fullName>
        <ecNumber evidence="1">3.6.5.-</ecNumber>
    </recommendedName>
    <alternativeName>
        <fullName evidence="1">GTP-binding protein Obg</fullName>
    </alternativeName>
</protein>
<organism>
    <name type="scientific">Streptococcus uberis (strain ATCC BAA-854 / 0140J)</name>
    <dbReference type="NCBI Taxonomy" id="218495"/>
    <lineage>
        <taxon>Bacteria</taxon>
        <taxon>Bacillati</taxon>
        <taxon>Bacillota</taxon>
        <taxon>Bacilli</taxon>
        <taxon>Lactobacillales</taxon>
        <taxon>Streptococcaceae</taxon>
        <taxon>Streptococcus</taxon>
    </lineage>
</organism>
<feature type="chain" id="PRO_0000386321" description="GTPase Obg">
    <location>
        <begin position="1"/>
        <end position="438"/>
    </location>
</feature>
<feature type="domain" description="Obg" evidence="3">
    <location>
        <begin position="2"/>
        <end position="160"/>
    </location>
</feature>
<feature type="domain" description="OBG-type G" evidence="1">
    <location>
        <begin position="161"/>
        <end position="338"/>
    </location>
</feature>
<feature type="domain" description="OCT" evidence="2">
    <location>
        <begin position="360"/>
        <end position="438"/>
    </location>
</feature>
<feature type="region of interest" description="Disordered" evidence="4">
    <location>
        <begin position="128"/>
        <end position="147"/>
    </location>
</feature>
<feature type="binding site" evidence="1">
    <location>
        <begin position="167"/>
        <end position="174"/>
    </location>
    <ligand>
        <name>GTP</name>
        <dbReference type="ChEBI" id="CHEBI:37565"/>
    </ligand>
</feature>
<feature type="binding site" evidence="1">
    <location>
        <position position="174"/>
    </location>
    <ligand>
        <name>Mg(2+)</name>
        <dbReference type="ChEBI" id="CHEBI:18420"/>
    </ligand>
</feature>
<feature type="binding site" evidence="1">
    <location>
        <begin position="192"/>
        <end position="196"/>
    </location>
    <ligand>
        <name>GTP</name>
        <dbReference type="ChEBI" id="CHEBI:37565"/>
    </ligand>
</feature>
<feature type="binding site" evidence="1">
    <location>
        <position position="194"/>
    </location>
    <ligand>
        <name>Mg(2+)</name>
        <dbReference type="ChEBI" id="CHEBI:18420"/>
    </ligand>
</feature>
<feature type="binding site" evidence="1">
    <location>
        <begin position="214"/>
        <end position="217"/>
    </location>
    <ligand>
        <name>GTP</name>
        <dbReference type="ChEBI" id="CHEBI:37565"/>
    </ligand>
</feature>
<feature type="binding site" evidence="1">
    <location>
        <begin position="284"/>
        <end position="287"/>
    </location>
    <ligand>
        <name>GTP</name>
        <dbReference type="ChEBI" id="CHEBI:37565"/>
    </ligand>
</feature>
<feature type="binding site" evidence="1">
    <location>
        <begin position="319"/>
        <end position="321"/>
    </location>
    <ligand>
        <name>GTP</name>
        <dbReference type="ChEBI" id="CHEBI:37565"/>
    </ligand>
</feature>
<reference key="1">
    <citation type="journal article" date="2009" name="BMC Genomics">
        <title>Evidence for niche adaptation in the genome of the bovine pathogen Streptococcus uberis.</title>
        <authorList>
            <person name="Ward P.N."/>
            <person name="Holden M.T.G."/>
            <person name="Leigh J.A."/>
            <person name="Lennard N."/>
            <person name="Bignell A."/>
            <person name="Barron A."/>
            <person name="Clark L."/>
            <person name="Quail M.A."/>
            <person name="Woodward J."/>
            <person name="Barrell B.G."/>
            <person name="Egan S.A."/>
            <person name="Field T.R."/>
            <person name="Maskell D."/>
            <person name="Kehoe M."/>
            <person name="Dowson C.G."/>
            <person name="Chanter N."/>
            <person name="Whatmore A.M."/>
            <person name="Bentley S.D."/>
            <person name="Parkhill J."/>
        </authorList>
    </citation>
    <scope>NUCLEOTIDE SEQUENCE [LARGE SCALE GENOMIC DNA]</scope>
    <source>
        <strain>ATCC BAA-854 / 0140J</strain>
    </source>
</reference>
<comment type="function">
    <text evidence="1">An essential GTPase which binds GTP, GDP and possibly (p)ppGpp with moderate affinity, with high nucleotide exchange rates and a fairly low GTP hydrolysis rate. Plays a role in control of the cell cycle, stress response, ribosome biogenesis and in those bacteria that undergo differentiation, in morphogenesis control.</text>
</comment>
<comment type="cofactor">
    <cofactor evidence="1">
        <name>Mg(2+)</name>
        <dbReference type="ChEBI" id="CHEBI:18420"/>
    </cofactor>
</comment>
<comment type="subunit">
    <text evidence="1">Monomer.</text>
</comment>
<comment type="subcellular location">
    <subcellularLocation>
        <location evidence="1">Cytoplasm</location>
    </subcellularLocation>
</comment>
<comment type="similarity">
    <text evidence="1">Belongs to the TRAFAC class OBG-HflX-like GTPase superfamily. OBG GTPase family.</text>
</comment>